<comment type="function">
    <text evidence="1">Part of the ABC transporter complex PstSACB involved in phosphate import. Responsible for energy coupling to the transport system.</text>
</comment>
<comment type="catalytic activity">
    <reaction evidence="1">
        <text>phosphate(out) + ATP + H2O = ADP + 2 phosphate(in) + H(+)</text>
        <dbReference type="Rhea" id="RHEA:24440"/>
        <dbReference type="ChEBI" id="CHEBI:15377"/>
        <dbReference type="ChEBI" id="CHEBI:15378"/>
        <dbReference type="ChEBI" id="CHEBI:30616"/>
        <dbReference type="ChEBI" id="CHEBI:43474"/>
        <dbReference type="ChEBI" id="CHEBI:456216"/>
        <dbReference type="EC" id="7.3.2.1"/>
    </reaction>
</comment>
<comment type="subunit">
    <text evidence="1">The complex is composed of two ATP-binding proteins (PstB), two transmembrane proteins (PstC and PstA) and a solute-binding protein (PstS).</text>
</comment>
<comment type="subcellular location">
    <subcellularLocation>
        <location evidence="1">Cell membrane</location>
        <topology evidence="1">Peripheral membrane protein</topology>
    </subcellularLocation>
</comment>
<comment type="similarity">
    <text evidence="1">Belongs to the ABC transporter superfamily. Phosphate importer (TC 3.A.1.7) family.</text>
</comment>
<proteinExistence type="inferred from homology"/>
<sequence>MAEYNWDERHIITFPEENSALTTKDLHVYYGEKEAIKGIDMQFEKNKITALIGPSGCGKSTYLRSLNRMNDTIDIARVTGQIMYEGIDVNAQDINVYEMRKHIGMVFQRPNPFAKSIYKNITFAYERAGVKDKKFLDEVVETSLKQAALWDQVKDDLHKSAFTLSGGQQQRLCIARAIAVKPEILLMDEPASALDPIATMQLEETMFELKKNYTIIIVTHNMQQAARASDYTAFFYLGDLIEYDKTNNIFQNAKCQSTSDYVSGRFG</sequence>
<evidence type="ECO:0000255" key="1">
    <source>
        <dbReference type="HAMAP-Rule" id="MF_01702"/>
    </source>
</evidence>
<accession>P63369</accession>
<accession>Q8DZV7</accession>
<accession>Q8E5K5</accession>
<gene>
    <name evidence="1" type="primary">pstB2</name>
    <name type="ordered locus">gbs1024</name>
</gene>
<feature type="chain" id="PRO_0000092888" description="Phosphate import ATP-binding protein PstB 2">
    <location>
        <begin position="1"/>
        <end position="267"/>
    </location>
</feature>
<feature type="domain" description="ABC transporter" evidence="1">
    <location>
        <begin position="21"/>
        <end position="262"/>
    </location>
</feature>
<feature type="binding site" evidence="1">
    <location>
        <begin position="53"/>
        <end position="60"/>
    </location>
    <ligand>
        <name>ATP</name>
        <dbReference type="ChEBI" id="CHEBI:30616"/>
    </ligand>
</feature>
<organism>
    <name type="scientific">Streptococcus agalactiae serotype III (strain NEM316)</name>
    <dbReference type="NCBI Taxonomy" id="211110"/>
    <lineage>
        <taxon>Bacteria</taxon>
        <taxon>Bacillati</taxon>
        <taxon>Bacillota</taxon>
        <taxon>Bacilli</taxon>
        <taxon>Lactobacillales</taxon>
        <taxon>Streptococcaceae</taxon>
        <taxon>Streptococcus</taxon>
    </lineage>
</organism>
<name>PSTB2_STRA3</name>
<reference key="1">
    <citation type="journal article" date="2002" name="Mol. Microbiol.">
        <title>Genome sequence of Streptococcus agalactiae, a pathogen causing invasive neonatal disease.</title>
        <authorList>
            <person name="Glaser P."/>
            <person name="Rusniok C."/>
            <person name="Buchrieser C."/>
            <person name="Chevalier F."/>
            <person name="Frangeul L."/>
            <person name="Msadek T."/>
            <person name="Zouine M."/>
            <person name="Couve E."/>
            <person name="Lalioui L."/>
            <person name="Poyart C."/>
            <person name="Trieu-Cuot P."/>
            <person name="Kunst F."/>
        </authorList>
    </citation>
    <scope>NUCLEOTIDE SEQUENCE [LARGE SCALE GENOMIC DNA]</scope>
    <source>
        <strain>NEM316</strain>
    </source>
</reference>
<dbReference type="EC" id="7.3.2.1" evidence="1"/>
<dbReference type="EMBL" id="AL766848">
    <property type="protein sequence ID" value="CAD46683.1"/>
    <property type="molecule type" value="Genomic_DNA"/>
</dbReference>
<dbReference type="SMR" id="P63369"/>
<dbReference type="KEGG" id="san:gbs1024"/>
<dbReference type="eggNOG" id="COG1117">
    <property type="taxonomic scope" value="Bacteria"/>
</dbReference>
<dbReference type="HOGENOM" id="CLU_000604_1_22_9"/>
<dbReference type="Proteomes" id="UP000000823">
    <property type="component" value="Chromosome"/>
</dbReference>
<dbReference type="GO" id="GO:0005886">
    <property type="term" value="C:plasma membrane"/>
    <property type="evidence" value="ECO:0007669"/>
    <property type="project" value="UniProtKB-SubCell"/>
</dbReference>
<dbReference type="GO" id="GO:0005524">
    <property type="term" value="F:ATP binding"/>
    <property type="evidence" value="ECO:0007669"/>
    <property type="project" value="UniProtKB-KW"/>
</dbReference>
<dbReference type="GO" id="GO:0016887">
    <property type="term" value="F:ATP hydrolysis activity"/>
    <property type="evidence" value="ECO:0007669"/>
    <property type="project" value="InterPro"/>
</dbReference>
<dbReference type="GO" id="GO:0015415">
    <property type="term" value="F:ATPase-coupled phosphate ion transmembrane transporter activity"/>
    <property type="evidence" value="ECO:0007669"/>
    <property type="project" value="UniProtKB-EC"/>
</dbReference>
<dbReference type="GO" id="GO:0035435">
    <property type="term" value="P:phosphate ion transmembrane transport"/>
    <property type="evidence" value="ECO:0007669"/>
    <property type="project" value="InterPro"/>
</dbReference>
<dbReference type="CDD" id="cd03260">
    <property type="entry name" value="ABC_PstB_phosphate_transporter"/>
    <property type="match status" value="1"/>
</dbReference>
<dbReference type="Gene3D" id="3.40.50.300">
    <property type="entry name" value="P-loop containing nucleotide triphosphate hydrolases"/>
    <property type="match status" value="1"/>
</dbReference>
<dbReference type="InterPro" id="IPR003593">
    <property type="entry name" value="AAA+_ATPase"/>
</dbReference>
<dbReference type="InterPro" id="IPR003439">
    <property type="entry name" value="ABC_transporter-like_ATP-bd"/>
</dbReference>
<dbReference type="InterPro" id="IPR017871">
    <property type="entry name" value="ABC_transporter-like_CS"/>
</dbReference>
<dbReference type="InterPro" id="IPR027417">
    <property type="entry name" value="P-loop_NTPase"/>
</dbReference>
<dbReference type="InterPro" id="IPR005670">
    <property type="entry name" value="PstB-like"/>
</dbReference>
<dbReference type="NCBIfam" id="TIGR00972">
    <property type="entry name" value="3a0107s01c2"/>
    <property type="match status" value="1"/>
</dbReference>
<dbReference type="PANTHER" id="PTHR43423">
    <property type="entry name" value="ABC TRANSPORTER I FAMILY MEMBER 17"/>
    <property type="match status" value="1"/>
</dbReference>
<dbReference type="PANTHER" id="PTHR43423:SF10">
    <property type="entry name" value="PHOSPHATE IMPORT ATP-BINDING PROTEIN PSTB 2"/>
    <property type="match status" value="1"/>
</dbReference>
<dbReference type="Pfam" id="PF00005">
    <property type="entry name" value="ABC_tran"/>
    <property type="match status" value="1"/>
</dbReference>
<dbReference type="SMART" id="SM00382">
    <property type="entry name" value="AAA"/>
    <property type="match status" value="1"/>
</dbReference>
<dbReference type="SUPFAM" id="SSF52540">
    <property type="entry name" value="P-loop containing nucleoside triphosphate hydrolases"/>
    <property type="match status" value="1"/>
</dbReference>
<dbReference type="PROSITE" id="PS00211">
    <property type="entry name" value="ABC_TRANSPORTER_1"/>
    <property type="match status" value="1"/>
</dbReference>
<dbReference type="PROSITE" id="PS50893">
    <property type="entry name" value="ABC_TRANSPORTER_2"/>
    <property type="match status" value="1"/>
</dbReference>
<dbReference type="PROSITE" id="PS51238">
    <property type="entry name" value="PSTB"/>
    <property type="match status" value="1"/>
</dbReference>
<keyword id="KW-0067">ATP-binding</keyword>
<keyword id="KW-1003">Cell membrane</keyword>
<keyword id="KW-0472">Membrane</keyword>
<keyword id="KW-0547">Nucleotide-binding</keyword>
<keyword id="KW-0592">Phosphate transport</keyword>
<keyword id="KW-1278">Translocase</keyword>
<keyword id="KW-0813">Transport</keyword>
<protein>
    <recommendedName>
        <fullName evidence="1">Phosphate import ATP-binding protein PstB 2</fullName>
        <ecNumber evidence="1">7.3.2.1</ecNumber>
    </recommendedName>
    <alternativeName>
        <fullName evidence="1">ABC phosphate transporter 2</fullName>
    </alternativeName>
    <alternativeName>
        <fullName evidence="1">Phosphate-transporting ATPase 2</fullName>
    </alternativeName>
</protein>